<protein>
    <recommendedName>
        <fullName evidence="8">Glycine--tRNA ligase, chloroplastic/mitochondrial 2</fullName>
        <ecNumber evidence="2">6.1.1.14</ecNumber>
    </recommendedName>
    <alternativeName>
        <fullName evidence="6">Glycyl-tRNA synthetase 2</fullName>
        <shortName evidence="6">GlyRS-2</shortName>
    </alternativeName>
    <alternativeName>
        <fullName evidence="7">Protein EMBRYO-DEFECTIVE-DEVELOPMENT 1</fullName>
    </alternativeName>
</protein>
<organism>
    <name type="scientific">Arabidopsis thaliana</name>
    <name type="common">Mouse-ear cress</name>
    <dbReference type="NCBI Taxonomy" id="3702"/>
    <lineage>
        <taxon>Eukaryota</taxon>
        <taxon>Viridiplantae</taxon>
        <taxon>Streptophyta</taxon>
        <taxon>Embryophyta</taxon>
        <taxon>Tracheophyta</taxon>
        <taxon>Spermatophyta</taxon>
        <taxon>Magnoliopsida</taxon>
        <taxon>eudicotyledons</taxon>
        <taxon>Gunneridae</taxon>
        <taxon>Pentapetalae</taxon>
        <taxon>rosids</taxon>
        <taxon>malvids</taxon>
        <taxon>Brassicales</taxon>
        <taxon>Brassicaceae</taxon>
        <taxon>Camelineae</taxon>
        <taxon>Arabidopsis</taxon>
    </lineage>
</organism>
<dbReference type="EC" id="6.1.1.14" evidence="2"/>
<dbReference type="EMBL" id="AJ003069">
    <property type="protein sequence ID" value="CAA05843.1"/>
    <property type="molecule type" value="mRNA"/>
</dbReference>
<dbReference type="EMBL" id="AL049658">
    <property type="protein sequence ID" value="CAB41128.1"/>
    <property type="status" value="ALT_SEQ"/>
    <property type="molecule type" value="Genomic_DNA"/>
</dbReference>
<dbReference type="EMBL" id="CP002686">
    <property type="protein sequence ID" value="AEE78369.1"/>
    <property type="molecule type" value="Genomic_DNA"/>
</dbReference>
<dbReference type="EMBL" id="AY136413">
    <property type="protein sequence ID" value="AAM97079.1"/>
    <property type="molecule type" value="mRNA"/>
</dbReference>
<dbReference type="EMBL" id="BT012191">
    <property type="protein sequence ID" value="AAS76678.1"/>
    <property type="molecule type" value="mRNA"/>
</dbReference>
<dbReference type="PIR" id="T06672">
    <property type="entry name" value="T06672"/>
</dbReference>
<dbReference type="PIR" id="T48850">
    <property type="entry name" value="T48850"/>
</dbReference>
<dbReference type="RefSeq" id="NP_190394.3">
    <molecule id="Q8L785-1"/>
    <property type="nucleotide sequence ID" value="NM_114680.4"/>
</dbReference>
<dbReference type="SMR" id="Q8L785"/>
<dbReference type="FunCoup" id="Q8L785">
    <property type="interactions" value="975"/>
</dbReference>
<dbReference type="STRING" id="3702.Q8L785"/>
<dbReference type="GlyGen" id="Q8L785">
    <property type="glycosylation" value="1 site"/>
</dbReference>
<dbReference type="iPTMnet" id="Q8L785"/>
<dbReference type="PaxDb" id="3702-AT3G48110.1"/>
<dbReference type="ProteomicsDB" id="233021">
    <molecule id="Q8L785-1"/>
</dbReference>
<dbReference type="EnsemblPlants" id="AT3G48110.1">
    <molecule id="Q8L785-1"/>
    <property type="protein sequence ID" value="AT3G48110.1"/>
    <property type="gene ID" value="AT3G48110"/>
</dbReference>
<dbReference type="GeneID" id="823966"/>
<dbReference type="Gramene" id="AT3G48110.1">
    <molecule id="Q8L785-1"/>
    <property type="protein sequence ID" value="AT3G48110.1"/>
    <property type="gene ID" value="AT3G48110"/>
</dbReference>
<dbReference type="KEGG" id="ath:AT3G48110"/>
<dbReference type="Araport" id="AT3G48110"/>
<dbReference type="TAIR" id="AT3G48110">
    <property type="gene designation" value="EDD1"/>
</dbReference>
<dbReference type="eggNOG" id="ENOG502QS5T">
    <property type="taxonomic scope" value="Eukaryota"/>
</dbReference>
<dbReference type="HOGENOM" id="CLU_007220_0_0_1"/>
<dbReference type="InParanoid" id="Q8L785"/>
<dbReference type="OMA" id="LPIPKRM"/>
<dbReference type="PhylomeDB" id="Q8L785"/>
<dbReference type="BRENDA" id="6.1.1.14">
    <property type="organism ID" value="399"/>
</dbReference>
<dbReference type="PRO" id="PR:Q8L785"/>
<dbReference type="Proteomes" id="UP000006548">
    <property type="component" value="Chromosome 3"/>
</dbReference>
<dbReference type="ExpressionAtlas" id="Q8L785">
    <property type="expression patterns" value="baseline and differential"/>
</dbReference>
<dbReference type="GO" id="GO:0009507">
    <property type="term" value="C:chloroplast"/>
    <property type="evidence" value="ECO:0000314"/>
    <property type="project" value="TAIR"/>
</dbReference>
<dbReference type="GO" id="GO:0009570">
    <property type="term" value="C:chloroplast stroma"/>
    <property type="evidence" value="ECO:0007005"/>
    <property type="project" value="TAIR"/>
</dbReference>
<dbReference type="GO" id="GO:0005739">
    <property type="term" value="C:mitochondrion"/>
    <property type="evidence" value="ECO:0000314"/>
    <property type="project" value="TAIR"/>
</dbReference>
<dbReference type="GO" id="GO:0005524">
    <property type="term" value="F:ATP binding"/>
    <property type="evidence" value="ECO:0007669"/>
    <property type="project" value="UniProtKB-KW"/>
</dbReference>
<dbReference type="GO" id="GO:0004820">
    <property type="term" value="F:glycine-tRNA ligase activity"/>
    <property type="evidence" value="ECO:0000250"/>
    <property type="project" value="UniProtKB"/>
</dbReference>
<dbReference type="GO" id="GO:0046983">
    <property type="term" value="F:protein dimerization activity"/>
    <property type="evidence" value="ECO:0000250"/>
    <property type="project" value="UniProtKB"/>
</dbReference>
<dbReference type="GO" id="GO:0009793">
    <property type="term" value="P:embryo development ending in seed dormancy"/>
    <property type="evidence" value="ECO:0000315"/>
    <property type="project" value="TAIR"/>
</dbReference>
<dbReference type="GO" id="GO:0006426">
    <property type="term" value="P:glycyl-tRNA aminoacylation"/>
    <property type="evidence" value="ECO:0000250"/>
    <property type="project" value="TAIR"/>
</dbReference>
<dbReference type="GO" id="GO:0045995">
    <property type="term" value="P:regulation of embryonic development"/>
    <property type="evidence" value="ECO:0000315"/>
    <property type="project" value="TAIR"/>
</dbReference>
<dbReference type="CDD" id="cd00733">
    <property type="entry name" value="GlyRS_alpha_core"/>
    <property type="match status" value="1"/>
</dbReference>
<dbReference type="FunFam" id="3.30.930.10:FF:000006">
    <property type="entry name" value="Glycine--tRNA ligase alpha subunit"/>
    <property type="match status" value="1"/>
</dbReference>
<dbReference type="FunFam" id="1.20.58.180:FF:000002">
    <property type="entry name" value="Glycine--tRNA ligase, chloroplastic/mitochondrial 2"/>
    <property type="match status" value="1"/>
</dbReference>
<dbReference type="Gene3D" id="3.30.930.10">
    <property type="entry name" value="Bira Bifunctional Protein, Domain 2"/>
    <property type="match status" value="1"/>
</dbReference>
<dbReference type="Gene3D" id="1.20.58.180">
    <property type="entry name" value="Class II aaRS and biotin synthetases, domain 2"/>
    <property type="match status" value="1"/>
</dbReference>
<dbReference type="HAMAP" id="MF_00254">
    <property type="entry name" value="Gly_tRNA_synth_alpha"/>
    <property type="match status" value="1"/>
</dbReference>
<dbReference type="HAMAP" id="MF_00255">
    <property type="entry name" value="Gly_tRNA_synth_beta"/>
    <property type="match status" value="1"/>
</dbReference>
<dbReference type="InterPro" id="IPR045864">
    <property type="entry name" value="aa-tRNA-synth_II/BPL/LPL"/>
</dbReference>
<dbReference type="InterPro" id="IPR015944">
    <property type="entry name" value="Gly-tRNA-synth_bsu"/>
</dbReference>
<dbReference type="InterPro" id="IPR006194">
    <property type="entry name" value="Gly-tRNA-synth_heterodimer"/>
</dbReference>
<dbReference type="InterPro" id="IPR002310">
    <property type="entry name" value="Gly-tRNA_ligase_asu"/>
</dbReference>
<dbReference type="NCBIfam" id="TIGR00388">
    <property type="entry name" value="glyQ"/>
    <property type="match status" value="1"/>
</dbReference>
<dbReference type="NCBIfam" id="TIGR00211">
    <property type="entry name" value="glyS"/>
    <property type="match status" value="1"/>
</dbReference>
<dbReference type="NCBIfam" id="NF006827">
    <property type="entry name" value="PRK09348.1"/>
    <property type="match status" value="1"/>
</dbReference>
<dbReference type="PANTHER" id="PTHR30075:SF2">
    <property type="entry name" value="GLYCINE--TRNA LIGASE, CHLOROPLASTIC_MITOCHONDRIAL 2"/>
    <property type="match status" value="1"/>
</dbReference>
<dbReference type="PANTHER" id="PTHR30075">
    <property type="entry name" value="GLYCYL-TRNA SYNTHETASE"/>
    <property type="match status" value="1"/>
</dbReference>
<dbReference type="Pfam" id="PF02091">
    <property type="entry name" value="tRNA-synt_2e"/>
    <property type="match status" value="1"/>
</dbReference>
<dbReference type="Pfam" id="PF02092">
    <property type="entry name" value="tRNA_synt_2f"/>
    <property type="match status" value="1"/>
</dbReference>
<dbReference type="PRINTS" id="PR01044">
    <property type="entry name" value="TRNASYNTHGA"/>
</dbReference>
<dbReference type="SUPFAM" id="SSF55681">
    <property type="entry name" value="Class II aaRS and biotin synthetases"/>
    <property type="match status" value="1"/>
</dbReference>
<dbReference type="SUPFAM" id="SSF109604">
    <property type="entry name" value="HD-domain/PDEase-like"/>
    <property type="match status" value="1"/>
</dbReference>
<dbReference type="PROSITE" id="PS50861">
    <property type="entry name" value="AA_TRNA_LIGASE_II_GLYAB"/>
    <property type="match status" value="2"/>
</dbReference>
<keyword id="KW-0025">Alternative splicing</keyword>
<keyword id="KW-0030">Aminoacyl-tRNA synthetase</keyword>
<keyword id="KW-0067">ATP-binding</keyword>
<keyword id="KW-0150">Chloroplast</keyword>
<keyword id="KW-0436">Ligase</keyword>
<keyword id="KW-0496">Mitochondrion</keyword>
<keyword id="KW-0547">Nucleotide-binding</keyword>
<keyword id="KW-0934">Plastid</keyword>
<keyword id="KW-0648">Protein biosynthesis</keyword>
<keyword id="KW-1185">Reference proteome</keyword>
<keyword id="KW-0809">Transit peptide</keyword>
<proteinExistence type="evidence at protein level"/>
<gene>
    <name evidence="7" type="primary">EDD1</name>
    <name type="ordered locus">At3g48110</name>
    <name type="ORF">T17F15.20</name>
</gene>
<name>SYGM2_ARATH</name>
<accession>Q8L785</accession>
<accession>O23150</accession>
<accession>Q9SU73</accession>
<sequence>MAILHFSLPLIVSFLRPHASPRFFLLPRSLSQSPFLSRRRFHRTSAVSSAAVHHQSYRNPDDDVTRAVSVPTFQQAIQRLQEYWASVGCAVMQPSNTEVGAGTMNPCTFLRVLGPEPWNVAYVEPSIRPDDSRYGENPNRLQRHTQFQVILKPDPGNSQQLFINSLSALGIDVTAHDIRFVEDNWESPVLGAWGLGWEIWMDGMEITQFTYFQQAGSLPLSPVSVEITYGLERIIMLLQEVDHFKKILYADGITYGELFLENEKEMSSYYLEHASVDRLQKHFDYFDEEARSLLALGLPIPAYDQLLKTSHAFNILDARGFIGVTERARYFGRMRSLARQCAQLWLATRESLGHPLGVASEPVPPVCHRAALEKVAEKVSEDPRSFIIEIGTEEMPPQDVINASEQLRVLVLELLENQRLRHGAVKAFGTPRRLVVLVDAMSSKQLEEEVEVRGPPASKAFDDEGNPTKAAEGFSRRYGVPLEKLYRKVSGKTEYVHARVTEPARLALEVLSEDLPGILAKISFPKSMRWNSSVMFSRPIRWVMALHGDLVVPFSFAGISSGNVSCGLRNTASASLLVQNAESYEDTMRNSGINIEIEERKKIILEKSNALAKSVSGRLVVPQNLLNEVANLVEAPVPLIGKFKESFLELPEELLTIVMQKHQKYFSIIDESGQLLPYFIAVANGAINEDVVKKGNEAVLRARYEDAKFFYEVDTRKRFSEFRDQLQGILFHEKLGTMLDKMNRLKKMVSKLCLALKIDEDLLPVVEDAASLAMSDLATAVVTEFTALSGIMARHYALRDGYSEQIAEALLEITLPRFSGDVIPKTDAGMVLAIGDRLDSLVGLFAAGCQPSSTNDPFGLRRISYGLVQILVEKDKNVNFKRVLELAASVQPTKVEANTVEDVYQFVTRRLEQLLVDNGVSPEVVRSVLAERGNNPCLAARTAYKTEKLSKGEMFPKIVEAYSRPTRIVRGKDVGVGVEVDENAFETPQERTLWSTYTSIKDRIHTGIEIEDFTEISMQLVEPLEDFFNNVFVMVEEERVRKNRLALLNNIANLPKGVIDLSFLPGF</sequence>
<feature type="transit peptide" description="Chloroplast and mitochondrion" evidence="4">
    <location>
        <begin position="1"/>
        <end position="50"/>
    </location>
</feature>
<feature type="chain" id="PRO_0000046017" description="Glycine--tRNA ligase, chloroplastic/mitochondrial 2" evidence="8">
    <location>
        <begin position="51"/>
        <end position="1067"/>
    </location>
</feature>
<feature type="binding site" evidence="1">
    <location>
        <position position="513"/>
    </location>
    <ligand>
        <name>substrate</name>
    </ligand>
</feature>
<feature type="binding site" evidence="1">
    <location>
        <begin position="589"/>
        <end position="596"/>
    </location>
    <ligand>
        <name>ATP</name>
        <dbReference type="ChEBI" id="CHEBI:30616"/>
    </ligand>
</feature>
<feature type="binding site" evidence="1">
    <location>
        <begin position="619"/>
        <end position="624"/>
    </location>
    <ligand>
        <name>ATP</name>
        <dbReference type="ChEBI" id="CHEBI:30616"/>
    </ligand>
</feature>
<feature type="binding site" evidence="1">
    <location>
        <begin position="624"/>
        <end position="628"/>
    </location>
    <ligand>
        <name>substrate</name>
    </ligand>
</feature>
<feature type="binding site" evidence="1">
    <location>
        <begin position="744"/>
        <end position="745"/>
    </location>
    <ligand>
        <name>ATP</name>
        <dbReference type="ChEBI" id="CHEBI:30616"/>
    </ligand>
</feature>
<feature type="binding site" evidence="1">
    <location>
        <begin position="855"/>
        <end position="859"/>
    </location>
    <ligand>
        <name>substrate</name>
    </ligand>
</feature>
<feature type="binding site" evidence="1">
    <location>
        <begin position="859"/>
        <end position="862"/>
    </location>
    <ligand>
        <name>ATP</name>
        <dbReference type="ChEBI" id="CHEBI:30616"/>
    </ligand>
</feature>
<feature type="splice variant" id="VSP_018098" description="In isoform 2." evidence="8">
    <location>
        <position position="1035"/>
    </location>
</feature>
<feature type="sequence conflict" description="In Ref. 1; CAA05843." evidence="8" ref="1">
    <original>S</original>
    <variation>T</variation>
    <location>
        <position position="336"/>
    </location>
</feature>
<feature type="sequence conflict" description="In Ref. 1; CAA05843." evidence="8" ref="1">
    <original>M</original>
    <variation>I</variation>
    <location>
        <position position="535"/>
    </location>
</feature>
<feature type="sequence conflict" description="In Ref. 1; CAA05843." evidence="8" ref="1">
    <original>S</original>
    <variation>N</variation>
    <location>
        <position position="616"/>
    </location>
</feature>
<feature type="sequence conflict" description="In Ref. 1; CAA05843." evidence="8" ref="1">
    <original>T</original>
    <variation>R</variation>
    <location>
        <position position="893"/>
    </location>
</feature>
<feature type="sequence conflict" description="In Ref. 1; CAA05843." evidence="8" ref="1">
    <original>D</original>
    <variation>E</variation>
    <location>
        <position position="1012"/>
    </location>
</feature>
<reference key="1">
    <citation type="journal article" date="1998" name="Plant Cell">
        <title>Inactivation of a glycyl-tRNA synthetase leads to an arrest in plant embryo development.</title>
        <authorList>
            <person name="Uwer U."/>
            <person name="Altmann T."/>
            <person name="Willmitzer L."/>
        </authorList>
    </citation>
    <scope>NUCLEOTIDE SEQUENCE [MRNA] (ISOFORM 1)</scope>
    <scope>DISRUPTION PHENOTYPE</scope>
    <source>
        <strain>cv. C24</strain>
        <tissue>Flower bud</tissue>
        <tissue>Silique</tissue>
    </source>
</reference>
<reference key="2">
    <citation type="journal article" date="2000" name="Nature">
        <title>Sequence and analysis of chromosome 3 of the plant Arabidopsis thaliana.</title>
        <authorList>
            <person name="Salanoubat M."/>
            <person name="Lemcke K."/>
            <person name="Rieger M."/>
            <person name="Ansorge W."/>
            <person name="Unseld M."/>
            <person name="Fartmann B."/>
            <person name="Valle G."/>
            <person name="Bloecker H."/>
            <person name="Perez-Alonso M."/>
            <person name="Obermaier B."/>
            <person name="Delseny M."/>
            <person name="Boutry M."/>
            <person name="Grivell L.A."/>
            <person name="Mache R."/>
            <person name="Puigdomenech P."/>
            <person name="De Simone V."/>
            <person name="Choisne N."/>
            <person name="Artiguenave F."/>
            <person name="Robert C."/>
            <person name="Brottier P."/>
            <person name="Wincker P."/>
            <person name="Cattolico L."/>
            <person name="Weissenbach J."/>
            <person name="Saurin W."/>
            <person name="Quetier F."/>
            <person name="Schaefer M."/>
            <person name="Mueller-Auer S."/>
            <person name="Gabel C."/>
            <person name="Fuchs M."/>
            <person name="Benes V."/>
            <person name="Wurmbach E."/>
            <person name="Drzonek H."/>
            <person name="Erfle H."/>
            <person name="Jordan N."/>
            <person name="Bangert S."/>
            <person name="Wiedelmann R."/>
            <person name="Kranz H."/>
            <person name="Voss H."/>
            <person name="Holland R."/>
            <person name="Brandt P."/>
            <person name="Nyakatura G."/>
            <person name="Vezzi A."/>
            <person name="D'Angelo M."/>
            <person name="Pallavicini A."/>
            <person name="Toppo S."/>
            <person name="Simionati B."/>
            <person name="Conrad A."/>
            <person name="Hornischer K."/>
            <person name="Kauer G."/>
            <person name="Loehnert T.-H."/>
            <person name="Nordsiek G."/>
            <person name="Reichelt J."/>
            <person name="Scharfe M."/>
            <person name="Schoen O."/>
            <person name="Bargues M."/>
            <person name="Terol J."/>
            <person name="Climent J."/>
            <person name="Navarro P."/>
            <person name="Collado C."/>
            <person name="Perez-Perez A."/>
            <person name="Ottenwaelder B."/>
            <person name="Duchemin D."/>
            <person name="Cooke R."/>
            <person name="Laudie M."/>
            <person name="Berger-Llauro C."/>
            <person name="Purnelle B."/>
            <person name="Masuy D."/>
            <person name="de Haan M."/>
            <person name="Maarse A.C."/>
            <person name="Alcaraz J.-P."/>
            <person name="Cottet A."/>
            <person name="Casacuberta E."/>
            <person name="Monfort A."/>
            <person name="Argiriou A."/>
            <person name="Flores M."/>
            <person name="Liguori R."/>
            <person name="Vitale D."/>
            <person name="Mannhaupt G."/>
            <person name="Haase D."/>
            <person name="Schoof H."/>
            <person name="Rudd S."/>
            <person name="Zaccaria P."/>
            <person name="Mewes H.-W."/>
            <person name="Mayer K.F.X."/>
            <person name="Kaul S."/>
            <person name="Town C.D."/>
            <person name="Koo H.L."/>
            <person name="Tallon L.J."/>
            <person name="Jenkins J."/>
            <person name="Rooney T."/>
            <person name="Rizzo M."/>
            <person name="Walts A."/>
            <person name="Utterback T."/>
            <person name="Fujii C.Y."/>
            <person name="Shea T.P."/>
            <person name="Creasy T.H."/>
            <person name="Haas B."/>
            <person name="Maiti R."/>
            <person name="Wu D."/>
            <person name="Peterson J."/>
            <person name="Van Aken S."/>
            <person name="Pai G."/>
            <person name="Militscher J."/>
            <person name="Sellers P."/>
            <person name="Gill J.E."/>
            <person name="Feldblyum T.V."/>
            <person name="Preuss D."/>
            <person name="Lin X."/>
            <person name="Nierman W.C."/>
            <person name="Salzberg S.L."/>
            <person name="White O."/>
            <person name="Venter J.C."/>
            <person name="Fraser C.M."/>
            <person name="Kaneko T."/>
            <person name="Nakamura Y."/>
            <person name="Sato S."/>
            <person name="Kato T."/>
            <person name="Asamizu E."/>
            <person name="Sasamoto S."/>
            <person name="Kimura T."/>
            <person name="Idesawa K."/>
            <person name="Kawashima K."/>
            <person name="Kishida Y."/>
            <person name="Kiyokawa C."/>
            <person name="Kohara M."/>
            <person name="Matsumoto M."/>
            <person name="Matsuno A."/>
            <person name="Muraki A."/>
            <person name="Nakayama S."/>
            <person name="Nakazaki N."/>
            <person name="Shinpo S."/>
            <person name="Takeuchi C."/>
            <person name="Wada T."/>
            <person name="Watanabe A."/>
            <person name="Yamada M."/>
            <person name="Yasuda M."/>
            <person name="Tabata S."/>
        </authorList>
    </citation>
    <scope>NUCLEOTIDE SEQUENCE [LARGE SCALE GENOMIC DNA]</scope>
    <source>
        <strain>cv. Columbia</strain>
    </source>
</reference>
<reference key="3">
    <citation type="journal article" date="2017" name="Plant J.">
        <title>Araport11: a complete reannotation of the Arabidopsis thaliana reference genome.</title>
        <authorList>
            <person name="Cheng C.Y."/>
            <person name="Krishnakumar V."/>
            <person name="Chan A.P."/>
            <person name="Thibaud-Nissen F."/>
            <person name="Schobel S."/>
            <person name="Town C.D."/>
        </authorList>
    </citation>
    <scope>GENOME REANNOTATION</scope>
    <source>
        <strain>cv. Columbia</strain>
    </source>
</reference>
<reference key="4">
    <citation type="journal article" date="2003" name="Science">
        <title>Empirical analysis of transcriptional activity in the Arabidopsis genome.</title>
        <authorList>
            <person name="Yamada K."/>
            <person name="Lim J."/>
            <person name="Dale J.M."/>
            <person name="Chen H."/>
            <person name="Shinn P."/>
            <person name="Palm C.J."/>
            <person name="Southwick A.M."/>
            <person name="Wu H.C."/>
            <person name="Kim C.J."/>
            <person name="Nguyen M."/>
            <person name="Pham P.K."/>
            <person name="Cheuk R.F."/>
            <person name="Karlin-Newmann G."/>
            <person name="Liu S.X."/>
            <person name="Lam B."/>
            <person name="Sakano H."/>
            <person name="Wu T."/>
            <person name="Yu G."/>
            <person name="Miranda M."/>
            <person name="Quach H.L."/>
            <person name="Tripp M."/>
            <person name="Chang C.H."/>
            <person name="Lee J.M."/>
            <person name="Toriumi M.J."/>
            <person name="Chan M.M."/>
            <person name="Tang C.C."/>
            <person name="Onodera C.S."/>
            <person name="Deng J.M."/>
            <person name="Akiyama K."/>
            <person name="Ansari Y."/>
            <person name="Arakawa T."/>
            <person name="Banh J."/>
            <person name="Banno F."/>
            <person name="Bowser L."/>
            <person name="Brooks S.Y."/>
            <person name="Carninci P."/>
            <person name="Chao Q."/>
            <person name="Choy N."/>
            <person name="Enju A."/>
            <person name="Goldsmith A.D."/>
            <person name="Gurjal M."/>
            <person name="Hansen N.F."/>
            <person name="Hayashizaki Y."/>
            <person name="Johnson-Hopson C."/>
            <person name="Hsuan V.W."/>
            <person name="Iida K."/>
            <person name="Karnes M."/>
            <person name="Khan S."/>
            <person name="Koesema E."/>
            <person name="Ishida J."/>
            <person name="Jiang P.X."/>
            <person name="Jones T."/>
            <person name="Kawai J."/>
            <person name="Kamiya A."/>
            <person name="Meyers C."/>
            <person name="Nakajima M."/>
            <person name="Narusaka M."/>
            <person name="Seki M."/>
            <person name="Sakurai T."/>
            <person name="Satou M."/>
            <person name="Tamse R."/>
            <person name="Vaysberg M."/>
            <person name="Wallender E.K."/>
            <person name="Wong C."/>
            <person name="Yamamura Y."/>
            <person name="Yuan S."/>
            <person name="Shinozaki K."/>
            <person name="Davis R.W."/>
            <person name="Theologis A."/>
            <person name="Ecker J.R."/>
        </authorList>
    </citation>
    <scope>NUCLEOTIDE SEQUENCE [LARGE SCALE MRNA] (ISOFORM 1)</scope>
    <source>
        <strain>cv. Columbia</strain>
    </source>
</reference>
<reference key="5">
    <citation type="submission" date="2004-03" db="EMBL/GenBank/DDBJ databases">
        <title>Arabidopsis ORF clones.</title>
        <authorList>
            <person name="Cheuk R.F."/>
            <person name="Chen H."/>
            <person name="Kim C.J."/>
            <person name="Shinn P."/>
            <person name="Carninci P."/>
            <person name="Hayashizaki Y."/>
            <person name="Ishida J."/>
            <person name="Kamiya A."/>
            <person name="Kawai J."/>
            <person name="Narusaka M."/>
            <person name="Sakurai T."/>
            <person name="Satou M."/>
            <person name="Seki M."/>
            <person name="Shinozaki K."/>
            <person name="Ecker J.R."/>
        </authorList>
    </citation>
    <scope>NUCLEOTIDE SEQUENCE [LARGE SCALE MRNA] (ISOFORM 1)</scope>
    <source>
        <strain>cv. Columbia</strain>
    </source>
</reference>
<reference key="6">
    <citation type="journal article" date="2001" name="J. Biol. Chem.">
        <title>Overlapping destinations for two dual targeted glycyl-tRNA synthetases in Arabidopsis thaliana and Phaseolus vulgaris.</title>
        <authorList>
            <person name="Duchene A.-M."/>
            <person name="Peeters N."/>
            <person name="Dietrich A."/>
            <person name="Cosset A."/>
            <person name="Small I.D."/>
            <person name="Wintz H."/>
        </authorList>
    </citation>
    <scope>CATALYTIC ACTIVITY</scope>
    <scope>SUBCELLULAR LOCATION</scope>
</reference>
<reference key="7">
    <citation type="journal article" date="2012" name="J. Exp. Bot.">
        <title>The Arabidopsis organelle-localized glycyl-tRNA synthetase encoded by EMBRYO DEFECTIVE DEVELOPMENT1 is required for organ patterning.</title>
        <authorList>
            <person name="Moschopoulos A."/>
            <person name="Derbyshire P."/>
            <person name="Byrne M.E."/>
        </authorList>
    </citation>
    <scope>DISRUPTION PHENOTYPE</scope>
</reference>
<reference key="8">
    <citation type="journal article" date="2015" name="J. Exp. Bot.">
        <title>Identification of cleavage sites and substrate proteins for two mitochondrial intermediate peptidases in Arabidopsis thaliana.</title>
        <authorList>
            <person name="Carrie C."/>
            <person name="Venne A.S."/>
            <person name="Zahedi R.P."/>
            <person name="Soll J."/>
        </authorList>
    </citation>
    <scope>IDENTIFICATION BY MASS SPECTROMETRY</scope>
    <scope>CLEAVAGE OF TRANSIT PEPTIDE AFTER ALA-50</scope>
</reference>
<evidence type="ECO:0000250" key="1">
    <source>
        <dbReference type="UniProtKB" id="P41250"/>
    </source>
</evidence>
<evidence type="ECO:0000269" key="2">
    <source>
    </source>
</evidence>
<evidence type="ECO:0000269" key="3">
    <source>
    </source>
</evidence>
<evidence type="ECO:0000269" key="4">
    <source>
    </source>
</evidence>
<evidence type="ECO:0000269" key="5">
    <source>
    </source>
</evidence>
<evidence type="ECO:0000303" key="6">
    <source>
    </source>
</evidence>
<evidence type="ECO:0000303" key="7">
    <source>
    </source>
</evidence>
<evidence type="ECO:0000305" key="8"/>
<evidence type="ECO:0000305" key="9">
    <source>
    </source>
</evidence>
<comment type="function">
    <text evidence="1">Catalyzes the attachment of glycine to tRNA(Gly). Is also able produce diadenosine tetraphosphate (Ap4A), a universal pleiotropic signaling molecule needed for cell regulation pathways, by direct condensation of 2 ATPs.</text>
</comment>
<comment type="catalytic activity">
    <reaction evidence="2">
        <text>tRNA(Gly) + glycine + ATP = glycyl-tRNA(Gly) + AMP + diphosphate</text>
        <dbReference type="Rhea" id="RHEA:16013"/>
        <dbReference type="Rhea" id="RHEA-COMP:9664"/>
        <dbReference type="Rhea" id="RHEA-COMP:9683"/>
        <dbReference type="ChEBI" id="CHEBI:30616"/>
        <dbReference type="ChEBI" id="CHEBI:33019"/>
        <dbReference type="ChEBI" id="CHEBI:57305"/>
        <dbReference type="ChEBI" id="CHEBI:78442"/>
        <dbReference type="ChEBI" id="CHEBI:78522"/>
        <dbReference type="ChEBI" id="CHEBI:456215"/>
        <dbReference type="EC" id="6.1.1.14"/>
    </reaction>
</comment>
<comment type="subunit">
    <text evidence="1">Homodimer.</text>
</comment>
<comment type="subcellular location">
    <subcellularLocation>
        <location evidence="2">Plastid</location>
        <location evidence="2">Chloroplast</location>
    </subcellularLocation>
    <subcellularLocation>
        <location evidence="2 9">Mitochondrion</location>
    </subcellularLocation>
</comment>
<comment type="alternative products">
    <event type="alternative splicing"/>
    <isoform>
        <id>Q8L785-1</id>
        <name>1</name>
        <sequence type="displayed"/>
    </isoform>
    <isoform>
        <id>Q8L785-2</id>
        <name>2</name>
        <sequence type="described" ref="VSP_018098"/>
    </isoform>
</comment>
<comment type="disruption phenotype">
    <text evidence="3 5">Embryo defective. Developmental arrest of the embryo between the globular and heart stages (PubMed:9707529). Plants with partial loss of EDD1 display changes in patterning of margin and distal regions of leaves (PubMed:22791832).</text>
</comment>
<comment type="miscellaneous">
    <molecule>Isoform 2</molecule>
    <text evidence="8">May be due to a competing donor splice site.</text>
</comment>
<comment type="similarity">
    <text evidence="8">Belongs to the class-II aminoacyl-tRNA synthetase family.</text>
</comment>
<comment type="sequence caution" evidence="8">
    <conflict type="erroneous gene model prediction">
        <sequence resource="EMBL-CDS" id="CAB41128"/>
    </conflict>
</comment>